<sequence>MDIVLEATSQTETQVAVQLEPLSSNVVAIVPAAGIGSRMGAGKPKQYLPLLGQSILAHTLDKLLSHPLISQVIVALHPEDADFYALPQAKHPKLKTVIGGSERANSVLAALDKAPDNSWALVHDAARPCLMASDIDKLLTSRVQFPQGAILAMPVRDTMKRANSLGEINSTVCRDNLWHALTPQLFPTSLLRLHLQGALNAGAVVTDEASAMEWAGISPGLVAGRADNIKVTHPDDLELAELFLMRAKA</sequence>
<protein>
    <recommendedName>
        <fullName evidence="1">2-C-methyl-D-erythritol 4-phosphate cytidylyltransferase</fullName>
        <ecNumber evidence="1">2.7.7.60</ecNumber>
    </recommendedName>
    <alternativeName>
        <fullName evidence="1">4-diphosphocytidyl-2C-methyl-D-erythritol synthase</fullName>
    </alternativeName>
    <alternativeName>
        <fullName evidence="1">MEP cytidylyltransferase</fullName>
        <shortName evidence="1">MCT</shortName>
    </alternativeName>
</protein>
<gene>
    <name evidence="1" type="primary">ispD</name>
    <name type="ordered locus">SO_3438</name>
</gene>
<keyword id="KW-0414">Isoprene biosynthesis</keyword>
<keyword id="KW-0548">Nucleotidyltransferase</keyword>
<keyword id="KW-1185">Reference proteome</keyword>
<keyword id="KW-0808">Transferase</keyword>
<dbReference type="EC" id="2.7.7.60" evidence="1"/>
<dbReference type="EMBL" id="AE014299">
    <property type="protein sequence ID" value="AAN56435.1"/>
    <property type="molecule type" value="Genomic_DNA"/>
</dbReference>
<dbReference type="RefSeq" id="NP_718991.1">
    <property type="nucleotide sequence ID" value="NC_004347.2"/>
</dbReference>
<dbReference type="RefSeq" id="WP_011073294.1">
    <property type="nucleotide sequence ID" value="NC_004347.2"/>
</dbReference>
<dbReference type="SMR" id="Q8EBR2"/>
<dbReference type="STRING" id="211586.SO_3438"/>
<dbReference type="PaxDb" id="211586-SO_3438"/>
<dbReference type="KEGG" id="son:SO_3438"/>
<dbReference type="PATRIC" id="fig|211586.12.peg.3333"/>
<dbReference type="eggNOG" id="COG1211">
    <property type="taxonomic scope" value="Bacteria"/>
</dbReference>
<dbReference type="HOGENOM" id="CLU_061281_3_1_6"/>
<dbReference type="OrthoDB" id="9806837at2"/>
<dbReference type="PhylomeDB" id="Q8EBR2"/>
<dbReference type="BioCyc" id="SONE211586:G1GMP-3209-MONOMER"/>
<dbReference type="UniPathway" id="UPA00056">
    <property type="reaction ID" value="UER00093"/>
</dbReference>
<dbReference type="Proteomes" id="UP000008186">
    <property type="component" value="Chromosome"/>
</dbReference>
<dbReference type="GO" id="GO:0050518">
    <property type="term" value="F:2-C-methyl-D-erythritol 4-phosphate cytidylyltransferase activity"/>
    <property type="evidence" value="ECO:0000318"/>
    <property type="project" value="GO_Central"/>
</dbReference>
<dbReference type="GO" id="GO:0019288">
    <property type="term" value="P:isopentenyl diphosphate biosynthetic process, methylerythritol 4-phosphate pathway"/>
    <property type="evidence" value="ECO:0007669"/>
    <property type="project" value="UniProtKB-UniRule"/>
</dbReference>
<dbReference type="CDD" id="cd02516">
    <property type="entry name" value="CDP-ME_synthetase"/>
    <property type="match status" value="1"/>
</dbReference>
<dbReference type="FunFam" id="3.90.550.10:FF:000003">
    <property type="entry name" value="2-C-methyl-D-erythritol 4-phosphate cytidylyltransferase"/>
    <property type="match status" value="1"/>
</dbReference>
<dbReference type="Gene3D" id="3.90.550.10">
    <property type="entry name" value="Spore Coat Polysaccharide Biosynthesis Protein SpsA, Chain A"/>
    <property type="match status" value="1"/>
</dbReference>
<dbReference type="HAMAP" id="MF_00108">
    <property type="entry name" value="IspD"/>
    <property type="match status" value="1"/>
</dbReference>
<dbReference type="InterPro" id="IPR001228">
    <property type="entry name" value="IspD"/>
</dbReference>
<dbReference type="InterPro" id="IPR034683">
    <property type="entry name" value="IspD/TarI"/>
</dbReference>
<dbReference type="InterPro" id="IPR050088">
    <property type="entry name" value="IspD/TarI_cytidylyltransf_bact"/>
</dbReference>
<dbReference type="InterPro" id="IPR029044">
    <property type="entry name" value="Nucleotide-diphossugar_trans"/>
</dbReference>
<dbReference type="NCBIfam" id="TIGR00453">
    <property type="entry name" value="ispD"/>
    <property type="match status" value="1"/>
</dbReference>
<dbReference type="PANTHER" id="PTHR32125">
    <property type="entry name" value="2-C-METHYL-D-ERYTHRITOL 4-PHOSPHATE CYTIDYLYLTRANSFERASE, CHLOROPLASTIC"/>
    <property type="match status" value="1"/>
</dbReference>
<dbReference type="PANTHER" id="PTHR32125:SF4">
    <property type="entry name" value="2-C-METHYL-D-ERYTHRITOL 4-PHOSPHATE CYTIDYLYLTRANSFERASE, CHLOROPLASTIC"/>
    <property type="match status" value="1"/>
</dbReference>
<dbReference type="Pfam" id="PF01128">
    <property type="entry name" value="IspD"/>
    <property type="match status" value="1"/>
</dbReference>
<dbReference type="SUPFAM" id="SSF53448">
    <property type="entry name" value="Nucleotide-diphospho-sugar transferases"/>
    <property type="match status" value="1"/>
</dbReference>
<organism>
    <name type="scientific">Shewanella oneidensis (strain ATCC 700550 / JCM 31522 / CIP 106686 / LMG 19005 / NCIMB 14063 / MR-1)</name>
    <dbReference type="NCBI Taxonomy" id="211586"/>
    <lineage>
        <taxon>Bacteria</taxon>
        <taxon>Pseudomonadati</taxon>
        <taxon>Pseudomonadota</taxon>
        <taxon>Gammaproteobacteria</taxon>
        <taxon>Alteromonadales</taxon>
        <taxon>Shewanellaceae</taxon>
        <taxon>Shewanella</taxon>
    </lineage>
</organism>
<name>ISPD_SHEON</name>
<evidence type="ECO:0000255" key="1">
    <source>
        <dbReference type="HAMAP-Rule" id="MF_00108"/>
    </source>
</evidence>
<feature type="chain" id="PRO_0000075611" description="2-C-methyl-D-erythritol 4-phosphate cytidylyltransferase">
    <location>
        <begin position="1"/>
        <end position="249"/>
    </location>
</feature>
<feature type="site" description="Transition state stabilizer" evidence="1">
    <location>
        <position position="38"/>
    </location>
</feature>
<feature type="site" description="Transition state stabilizer" evidence="1">
    <location>
        <position position="45"/>
    </location>
</feature>
<feature type="site" description="Positions MEP for the nucleophilic attack" evidence="1">
    <location>
        <position position="174"/>
    </location>
</feature>
<feature type="site" description="Positions MEP for the nucleophilic attack" evidence="1">
    <location>
        <position position="230"/>
    </location>
</feature>
<accession>Q8EBR2</accession>
<proteinExistence type="inferred from homology"/>
<comment type="function">
    <text evidence="1">Catalyzes the formation of 4-diphosphocytidyl-2-C-methyl-D-erythritol from CTP and 2-C-methyl-D-erythritol 4-phosphate (MEP).</text>
</comment>
<comment type="catalytic activity">
    <reaction evidence="1">
        <text>2-C-methyl-D-erythritol 4-phosphate + CTP + H(+) = 4-CDP-2-C-methyl-D-erythritol + diphosphate</text>
        <dbReference type="Rhea" id="RHEA:13429"/>
        <dbReference type="ChEBI" id="CHEBI:15378"/>
        <dbReference type="ChEBI" id="CHEBI:33019"/>
        <dbReference type="ChEBI" id="CHEBI:37563"/>
        <dbReference type="ChEBI" id="CHEBI:57823"/>
        <dbReference type="ChEBI" id="CHEBI:58262"/>
        <dbReference type="EC" id="2.7.7.60"/>
    </reaction>
</comment>
<comment type="pathway">
    <text evidence="1">Isoprenoid biosynthesis; isopentenyl diphosphate biosynthesis via DXP pathway; isopentenyl diphosphate from 1-deoxy-D-xylulose 5-phosphate: step 2/6.</text>
</comment>
<comment type="similarity">
    <text evidence="1">Belongs to the IspD/TarI cytidylyltransferase family. IspD subfamily.</text>
</comment>
<reference key="1">
    <citation type="journal article" date="2002" name="Nat. Biotechnol.">
        <title>Genome sequence of the dissimilatory metal ion-reducing bacterium Shewanella oneidensis.</title>
        <authorList>
            <person name="Heidelberg J.F."/>
            <person name="Paulsen I.T."/>
            <person name="Nelson K.E."/>
            <person name="Gaidos E.J."/>
            <person name="Nelson W.C."/>
            <person name="Read T.D."/>
            <person name="Eisen J.A."/>
            <person name="Seshadri R."/>
            <person name="Ward N.L."/>
            <person name="Methe B.A."/>
            <person name="Clayton R.A."/>
            <person name="Meyer T."/>
            <person name="Tsapin A."/>
            <person name="Scott J."/>
            <person name="Beanan M.J."/>
            <person name="Brinkac L.M."/>
            <person name="Daugherty S.C."/>
            <person name="DeBoy R.T."/>
            <person name="Dodson R.J."/>
            <person name="Durkin A.S."/>
            <person name="Haft D.H."/>
            <person name="Kolonay J.F."/>
            <person name="Madupu R."/>
            <person name="Peterson J.D."/>
            <person name="Umayam L.A."/>
            <person name="White O."/>
            <person name="Wolf A.M."/>
            <person name="Vamathevan J.J."/>
            <person name="Weidman J.F."/>
            <person name="Impraim M."/>
            <person name="Lee K."/>
            <person name="Berry K.J."/>
            <person name="Lee C."/>
            <person name="Mueller J."/>
            <person name="Khouri H.M."/>
            <person name="Gill J."/>
            <person name="Utterback T.R."/>
            <person name="McDonald L.A."/>
            <person name="Feldblyum T.V."/>
            <person name="Smith H.O."/>
            <person name="Venter J.C."/>
            <person name="Nealson K.H."/>
            <person name="Fraser C.M."/>
        </authorList>
    </citation>
    <scope>NUCLEOTIDE SEQUENCE [LARGE SCALE GENOMIC DNA]</scope>
    <source>
        <strain>ATCC 700550 / JCM 31522 / CIP 106686 / LMG 19005 / NCIMB 14063 / MR-1</strain>
    </source>
</reference>